<accession>Q60368</accession>
<dbReference type="EMBL" id="L77117">
    <property type="protein sequence ID" value="AAB98043.1"/>
    <property type="molecule type" value="Genomic_DNA"/>
</dbReference>
<dbReference type="PIR" id="E64307">
    <property type="entry name" value="E64307"/>
</dbReference>
<dbReference type="RefSeq" id="WP_010869553.1">
    <property type="nucleotide sequence ID" value="NC_000909.1"/>
</dbReference>
<dbReference type="SMR" id="Q60368"/>
<dbReference type="STRING" id="243232.MJ_0061"/>
<dbReference type="PaxDb" id="243232-MJ_0061"/>
<dbReference type="EnsemblBacteria" id="AAB98043">
    <property type="protein sequence ID" value="AAB98043"/>
    <property type="gene ID" value="MJ_0061"/>
</dbReference>
<dbReference type="GeneID" id="1450900"/>
<dbReference type="KEGG" id="mja:MJ_0061"/>
<dbReference type="eggNOG" id="arCOG00959">
    <property type="taxonomic scope" value="Archaea"/>
</dbReference>
<dbReference type="HOGENOM" id="CLU_2476052_0_0_2"/>
<dbReference type="InParanoid" id="Q60368"/>
<dbReference type="Proteomes" id="UP000000805">
    <property type="component" value="Chromosome"/>
</dbReference>
<dbReference type="GO" id="GO:0051539">
    <property type="term" value="F:4 iron, 4 sulfur cluster binding"/>
    <property type="evidence" value="ECO:0007669"/>
    <property type="project" value="UniProtKB-KW"/>
</dbReference>
<dbReference type="GO" id="GO:0046872">
    <property type="term" value="F:metal ion binding"/>
    <property type="evidence" value="ECO:0007669"/>
    <property type="project" value="UniProtKB-KW"/>
</dbReference>
<dbReference type="Gene3D" id="3.30.70.20">
    <property type="match status" value="1"/>
</dbReference>
<dbReference type="InterPro" id="IPR017896">
    <property type="entry name" value="4Fe4S_Fe-S-bd"/>
</dbReference>
<dbReference type="InterPro" id="IPR050572">
    <property type="entry name" value="Fe-S_Ferredoxin"/>
</dbReference>
<dbReference type="PANTHER" id="PTHR43687:SF5">
    <property type="entry name" value="4FE-4S FERREDOXIN-TYPE DOMAIN-CONTAINING PROTEIN"/>
    <property type="match status" value="1"/>
</dbReference>
<dbReference type="PANTHER" id="PTHR43687">
    <property type="entry name" value="ADENYLYLSULFATE REDUCTASE, BETA SUBUNIT"/>
    <property type="match status" value="1"/>
</dbReference>
<dbReference type="Pfam" id="PF13187">
    <property type="entry name" value="Fer4_9"/>
    <property type="match status" value="1"/>
</dbReference>
<dbReference type="SUPFAM" id="SSF54862">
    <property type="entry name" value="4Fe-4S ferredoxins"/>
    <property type="match status" value="1"/>
</dbReference>
<dbReference type="PROSITE" id="PS51379">
    <property type="entry name" value="4FE4S_FER_2"/>
    <property type="match status" value="2"/>
</dbReference>
<reference key="1">
    <citation type="journal article" date="1996" name="Science">
        <title>Complete genome sequence of the methanogenic archaeon, Methanococcus jannaschii.</title>
        <authorList>
            <person name="Bult C.J."/>
            <person name="White O."/>
            <person name="Olsen G.J."/>
            <person name="Zhou L."/>
            <person name="Fleischmann R.D."/>
            <person name="Sutton G.G."/>
            <person name="Blake J.A."/>
            <person name="FitzGerald L.M."/>
            <person name="Clayton R.A."/>
            <person name="Gocayne J.D."/>
            <person name="Kerlavage A.R."/>
            <person name="Dougherty B.A."/>
            <person name="Tomb J.-F."/>
            <person name="Adams M.D."/>
            <person name="Reich C.I."/>
            <person name="Overbeek R."/>
            <person name="Kirkness E.F."/>
            <person name="Weinstock K.G."/>
            <person name="Merrick J.M."/>
            <person name="Glodek A."/>
            <person name="Scott J.L."/>
            <person name="Geoghagen N.S.M."/>
            <person name="Weidman J.F."/>
            <person name="Fuhrmann J.L."/>
            <person name="Nguyen D."/>
            <person name="Utterback T.R."/>
            <person name="Kelley J.M."/>
            <person name="Peterson J.D."/>
            <person name="Sadow P.W."/>
            <person name="Hanna M.C."/>
            <person name="Cotton M.D."/>
            <person name="Roberts K.M."/>
            <person name="Hurst M.A."/>
            <person name="Kaine B.P."/>
            <person name="Borodovsky M."/>
            <person name="Klenk H.-P."/>
            <person name="Fraser C.M."/>
            <person name="Smith H.O."/>
            <person name="Woese C.R."/>
            <person name="Venter J.C."/>
        </authorList>
    </citation>
    <scope>NUCLEOTIDE SEQUENCE [LARGE SCALE GENOMIC DNA]</scope>
    <source>
        <strain>ATCC 43067 / DSM 2661 / JAL-1 / JCM 10045 / NBRC 100440</strain>
    </source>
</reference>
<gene>
    <name type="ordered locus">MJ0061</name>
</gene>
<comment type="cofactor">
    <cofactor evidence="1">
        <name>[4Fe-4S] cluster</name>
        <dbReference type="ChEBI" id="CHEBI:49883"/>
    </cofactor>
    <text evidence="1">Binds 2 [4Fe-4S] clusters.</text>
</comment>
<organism>
    <name type="scientific">Methanocaldococcus jannaschii (strain ATCC 43067 / DSM 2661 / JAL-1 / JCM 10045 / NBRC 100440)</name>
    <name type="common">Methanococcus jannaschii</name>
    <dbReference type="NCBI Taxonomy" id="243232"/>
    <lineage>
        <taxon>Archaea</taxon>
        <taxon>Methanobacteriati</taxon>
        <taxon>Methanobacteriota</taxon>
        <taxon>Methanomada group</taxon>
        <taxon>Methanococci</taxon>
        <taxon>Methanococcales</taxon>
        <taxon>Methanocaldococcaceae</taxon>
        <taxon>Methanocaldococcus</taxon>
    </lineage>
</organism>
<keyword id="KW-0004">4Fe-4S</keyword>
<keyword id="KW-0249">Electron transport</keyword>
<keyword id="KW-0408">Iron</keyword>
<keyword id="KW-0411">Iron-sulfur</keyword>
<keyword id="KW-0479">Metal-binding</keyword>
<keyword id="KW-1185">Reference proteome</keyword>
<keyword id="KW-0677">Repeat</keyword>
<keyword id="KW-0813">Transport</keyword>
<name>FER1_METJA</name>
<proteinExistence type="inferred from homology"/>
<feature type="chain" id="PRO_0000159129" description="Uncharacterized ferredoxin MJ0061">
    <location>
        <begin position="1"/>
        <end position="80"/>
    </location>
</feature>
<feature type="domain" description="4Fe-4S ferredoxin-type 1" evidence="2">
    <location>
        <begin position="21"/>
        <end position="49"/>
    </location>
</feature>
<feature type="domain" description="4Fe-4S ferredoxin-type 2" evidence="2">
    <location>
        <begin position="50"/>
        <end position="80"/>
    </location>
</feature>
<feature type="binding site" evidence="1">
    <location>
        <position position="30"/>
    </location>
    <ligand>
        <name>[4Fe-4S] cluster</name>
        <dbReference type="ChEBI" id="CHEBI:49883"/>
        <label>1</label>
    </ligand>
</feature>
<feature type="binding site" evidence="1">
    <location>
        <position position="33"/>
    </location>
    <ligand>
        <name>[4Fe-4S] cluster</name>
        <dbReference type="ChEBI" id="CHEBI:49883"/>
        <label>1</label>
    </ligand>
</feature>
<feature type="binding site" evidence="1">
    <location>
        <position position="36"/>
    </location>
    <ligand>
        <name>[4Fe-4S] cluster</name>
        <dbReference type="ChEBI" id="CHEBI:49883"/>
        <label>1</label>
    </ligand>
</feature>
<feature type="binding site" evidence="1">
    <location>
        <position position="40"/>
    </location>
    <ligand>
        <name>[4Fe-4S] cluster</name>
        <dbReference type="ChEBI" id="CHEBI:49883"/>
        <label>1</label>
    </ligand>
</feature>
<feature type="binding site" evidence="1">
    <location>
        <position position="60"/>
    </location>
    <ligand>
        <name>[4Fe-4S] cluster</name>
        <dbReference type="ChEBI" id="CHEBI:49883"/>
        <label>2</label>
    </ligand>
</feature>
<feature type="binding site" evidence="1">
    <location>
        <position position="63"/>
    </location>
    <ligand>
        <name>[4Fe-4S] cluster</name>
        <dbReference type="ChEBI" id="CHEBI:49883"/>
        <label>2</label>
    </ligand>
</feature>
<feature type="binding site" evidence="1">
    <location>
        <position position="66"/>
    </location>
    <ligand>
        <name>[4Fe-4S] cluster</name>
        <dbReference type="ChEBI" id="CHEBI:49883"/>
        <label>2</label>
    </ligand>
</feature>
<feature type="binding site" evidence="1">
    <location>
        <position position="70"/>
    </location>
    <ligand>
        <name>[4Fe-4S] cluster</name>
        <dbReference type="ChEBI" id="CHEBI:49883"/>
        <label>2</label>
    </ligand>
</feature>
<sequence>MLSKILGIFKGKEKIEEKSNKIIEIDYNKCKNCLSCYRVCKNNVFAIKNNRVVVKNENNCTKCGECLKVCRYGAIILYDA</sequence>
<evidence type="ECO:0000250" key="1"/>
<evidence type="ECO:0000255" key="2">
    <source>
        <dbReference type="PROSITE-ProRule" id="PRU00711"/>
    </source>
</evidence>
<protein>
    <recommendedName>
        <fullName>Uncharacterized ferredoxin MJ0061</fullName>
    </recommendedName>
</protein>